<proteinExistence type="inferred from homology"/>
<keyword id="KW-0007">Acetylation</keyword>
<keyword id="KW-0113">Calvin cycle</keyword>
<keyword id="KW-0120">Carbon dioxide fixation</keyword>
<keyword id="KW-0150">Chloroplast</keyword>
<keyword id="KW-1015">Disulfide bond</keyword>
<keyword id="KW-0456">Lyase</keyword>
<keyword id="KW-0460">Magnesium</keyword>
<keyword id="KW-0479">Metal-binding</keyword>
<keyword id="KW-0488">Methylation</keyword>
<keyword id="KW-0503">Monooxygenase</keyword>
<keyword id="KW-0560">Oxidoreductase</keyword>
<keyword id="KW-0601">Photorespiration</keyword>
<keyword id="KW-0602">Photosynthesis</keyword>
<keyword id="KW-0934">Plastid</keyword>
<gene>
    <name evidence="1" type="primary">rbcL</name>
</gene>
<protein>
    <recommendedName>
        <fullName evidence="1">Ribulose bisphosphate carboxylase large chain</fullName>
        <shortName evidence="1">RuBisCO large subunit</shortName>
        <ecNumber evidence="1">4.1.1.39</ecNumber>
    </recommendedName>
</protein>
<reference key="1">
    <citation type="journal article" date="1994" name="Plant Syst. Evol.">
        <title>Phylogenetic relationships among genera in the Liliaceae-Asparagoideae-Polygonatae s.l. inferred from rbcL gene sequence data.</title>
        <authorList>
            <person name="Shinwari Z.K."/>
            <person name="Kato H."/>
            <person name="Terauchi R."/>
            <person name="Kawano S."/>
        </authorList>
    </citation>
    <scope>NUCLEOTIDE SEQUENCE [GENOMIC DNA]</scope>
</reference>
<geneLocation type="chloroplast"/>
<sequence length="459" mass="50682">MSPQTETKASAGFKAGVKDYKLTYYTPDYETKDTDILAAFRVTPQPGVPPEEAGAAVAAESSTGTWTTVWTDGLTSLDRYKGRCYHIESVVGEEDQFIAYVAYPLDLFEEGSVTNMFTSIVGNVFGFKALRALRLEDLRIPPAYSKTFQGPPHGIQVERDKLNKYGRPLLGCTIKPKLGLSAKNYGRAVYECLRGGLDFTKDDENVNSQPFMRWRDRFLFCAEAIYKAQAETGEIKGHYLNATAGTCEEMIKRAVFARELGVPIVMHDYLAGGFTANTSLAFYCRDNGLLLHIHRAMHAVIDRQKNHGMHFRVLAKALRMSGGDHIHAGTVVGKLEGEREMTLGFVDLLRDDFIEKDRSRGIFFTQDWVSMPGVLPVASGGIHVWHMPALTEIFGDDSVLQFGGGTLGHPWGNAPGAVANRVALEACVQARNEGRDLAREGNEIIREACKWSPELAAAC</sequence>
<accession>Q36800</accession>
<organism>
    <name type="scientific">Streptopus lanceolatus</name>
    <name type="common">Rose twisted stalk</name>
    <name type="synonym">Streptopus roseus</name>
    <dbReference type="NCBI Taxonomy" id="34197"/>
    <lineage>
        <taxon>Eukaryota</taxon>
        <taxon>Viridiplantae</taxon>
        <taxon>Streptophyta</taxon>
        <taxon>Embryophyta</taxon>
        <taxon>Tracheophyta</taxon>
        <taxon>Spermatophyta</taxon>
        <taxon>Magnoliopsida</taxon>
        <taxon>Liliopsida</taxon>
        <taxon>Asparagales</taxon>
        <taxon>Asparagaceae</taxon>
        <taxon>Nolinoideae</taxon>
        <taxon>Streptopus</taxon>
    </lineage>
</organism>
<dbReference type="EC" id="4.1.1.39" evidence="1"/>
<dbReference type="EMBL" id="D17381">
    <property type="protein sequence ID" value="BAA04199.1"/>
    <property type="molecule type" value="Genomic_DNA"/>
</dbReference>
<dbReference type="SMR" id="Q36800"/>
<dbReference type="GO" id="GO:0009507">
    <property type="term" value="C:chloroplast"/>
    <property type="evidence" value="ECO:0007669"/>
    <property type="project" value="UniProtKB-SubCell"/>
</dbReference>
<dbReference type="GO" id="GO:0000287">
    <property type="term" value="F:magnesium ion binding"/>
    <property type="evidence" value="ECO:0007669"/>
    <property type="project" value="InterPro"/>
</dbReference>
<dbReference type="GO" id="GO:0004497">
    <property type="term" value="F:monooxygenase activity"/>
    <property type="evidence" value="ECO:0007669"/>
    <property type="project" value="UniProtKB-KW"/>
</dbReference>
<dbReference type="GO" id="GO:0016984">
    <property type="term" value="F:ribulose-bisphosphate carboxylase activity"/>
    <property type="evidence" value="ECO:0007669"/>
    <property type="project" value="UniProtKB-EC"/>
</dbReference>
<dbReference type="GO" id="GO:0009853">
    <property type="term" value="P:photorespiration"/>
    <property type="evidence" value="ECO:0007669"/>
    <property type="project" value="UniProtKB-KW"/>
</dbReference>
<dbReference type="GO" id="GO:0019253">
    <property type="term" value="P:reductive pentose-phosphate cycle"/>
    <property type="evidence" value="ECO:0007669"/>
    <property type="project" value="UniProtKB-KW"/>
</dbReference>
<dbReference type="CDD" id="cd08212">
    <property type="entry name" value="RuBisCO_large_I"/>
    <property type="match status" value="1"/>
</dbReference>
<dbReference type="FunFam" id="3.20.20.110:FF:000001">
    <property type="entry name" value="Ribulose bisphosphate carboxylase large chain"/>
    <property type="match status" value="1"/>
</dbReference>
<dbReference type="FunFam" id="3.30.70.150:FF:000001">
    <property type="entry name" value="Ribulose bisphosphate carboxylase large chain"/>
    <property type="match status" value="1"/>
</dbReference>
<dbReference type="Gene3D" id="3.20.20.110">
    <property type="entry name" value="Ribulose bisphosphate carboxylase, large subunit, C-terminal domain"/>
    <property type="match status" value="1"/>
</dbReference>
<dbReference type="Gene3D" id="3.30.70.150">
    <property type="entry name" value="RuBisCO large subunit, N-terminal domain"/>
    <property type="match status" value="1"/>
</dbReference>
<dbReference type="HAMAP" id="MF_01338">
    <property type="entry name" value="RuBisCO_L_type1"/>
    <property type="match status" value="1"/>
</dbReference>
<dbReference type="InterPro" id="IPR033966">
    <property type="entry name" value="RuBisCO"/>
</dbReference>
<dbReference type="InterPro" id="IPR020878">
    <property type="entry name" value="RuBisCo_large_chain_AS"/>
</dbReference>
<dbReference type="InterPro" id="IPR000685">
    <property type="entry name" value="RuBisCO_lsu_C"/>
</dbReference>
<dbReference type="InterPro" id="IPR036376">
    <property type="entry name" value="RuBisCO_lsu_C_sf"/>
</dbReference>
<dbReference type="InterPro" id="IPR017443">
    <property type="entry name" value="RuBisCO_lsu_fd_N"/>
</dbReference>
<dbReference type="InterPro" id="IPR036422">
    <property type="entry name" value="RuBisCO_lsu_N_sf"/>
</dbReference>
<dbReference type="InterPro" id="IPR020888">
    <property type="entry name" value="RuBisCO_lsuI"/>
</dbReference>
<dbReference type="NCBIfam" id="NF003252">
    <property type="entry name" value="PRK04208.1"/>
    <property type="match status" value="1"/>
</dbReference>
<dbReference type="PANTHER" id="PTHR42704">
    <property type="entry name" value="RIBULOSE BISPHOSPHATE CARBOXYLASE"/>
    <property type="match status" value="1"/>
</dbReference>
<dbReference type="PANTHER" id="PTHR42704:SF15">
    <property type="entry name" value="RIBULOSE BISPHOSPHATE CARBOXYLASE LARGE CHAIN"/>
    <property type="match status" value="1"/>
</dbReference>
<dbReference type="Pfam" id="PF00016">
    <property type="entry name" value="RuBisCO_large"/>
    <property type="match status" value="1"/>
</dbReference>
<dbReference type="Pfam" id="PF02788">
    <property type="entry name" value="RuBisCO_large_N"/>
    <property type="match status" value="1"/>
</dbReference>
<dbReference type="SFLD" id="SFLDG01052">
    <property type="entry name" value="RuBisCO"/>
    <property type="match status" value="1"/>
</dbReference>
<dbReference type="SFLD" id="SFLDS00014">
    <property type="entry name" value="RuBisCO"/>
    <property type="match status" value="1"/>
</dbReference>
<dbReference type="SFLD" id="SFLDG00301">
    <property type="entry name" value="RuBisCO-like_proteins"/>
    <property type="match status" value="1"/>
</dbReference>
<dbReference type="SUPFAM" id="SSF51649">
    <property type="entry name" value="RuBisCo, C-terminal domain"/>
    <property type="match status" value="1"/>
</dbReference>
<dbReference type="SUPFAM" id="SSF54966">
    <property type="entry name" value="RuBisCO, large subunit, small (N-terminal) domain"/>
    <property type="match status" value="1"/>
</dbReference>
<dbReference type="PROSITE" id="PS00157">
    <property type="entry name" value="RUBISCO_LARGE"/>
    <property type="match status" value="1"/>
</dbReference>
<comment type="function">
    <text evidence="1">RuBisCO catalyzes two reactions: the carboxylation of D-ribulose 1,5-bisphosphate, the primary event in carbon dioxide fixation, as well as the oxidative fragmentation of the pentose substrate in the photorespiration process. Both reactions occur simultaneously and in competition at the same active site.</text>
</comment>
<comment type="catalytic activity">
    <reaction evidence="1">
        <text>2 (2R)-3-phosphoglycerate + 2 H(+) = D-ribulose 1,5-bisphosphate + CO2 + H2O</text>
        <dbReference type="Rhea" id="RHEA:23124"/>
        <dbReference type="ChEBI" id="CHEBI:15377"/>
        <dbReference type="ChEBI" id="CHEBI:15378"/>
        <dbReference type="ChEBI" id="CHEBI:16526"/>
        <dbReference type="ChEBI" id="CHEBI:57870"/>
        <dbReference type="ChEBI" id="CHEBI:58272"/>
        <dbReference type="EC" id="4.1.1.39"/>
    </reaction>
</comment>
<comment type="catalytic activity">
    <reaction evidence="1">
        <text>D-ribulose 1,5-bisphosphate + O2 = 2-phosphoglycolate + (2R)-3-phosphoglycerate + 2 H(+)</text>
        <dbReference type="Rhea" id="RHEA:36631"/>
        <dbReference type="ChEBI" id="CHEBI:15378"/>
        <dbReference type="ChEBI" id="CHEBI:15379"/>
        <dbReference type="ChEBI" id="CHEBI:57870"/>
        <dbReference type="ChEBI" id="CHEBI:58033"/>
        <dbReference type="ChEBI" id="CHEBI:58272"/>
    </reaction>
</comment>
<comment type="cofactor">
    <cofactor evidence="1">
        <name>Mg(2+)</name>
        <dbReference type="ChEBI" id="CHEBI:18420"/>
    </cofactor>
    <text evidence="1">Binds 1 Mg(2+) ion per subunit.</text>
</comment>
<comment type="subunit">
    <text evidence="1">Heterohexadecamer of 8 large chains and 8 small chains; disulfide-linked. The disulfide link is formed within the large subunit homodimers.</text>
</comment>
<comment type="subcellular location">
    <subcellularLocation>
        <location>Plastid</location>
        <location>Chloroplast</location>
    </subcellularLocation>
</comment>
<comment type="PTM">
    <text evidence="1">The disulfide bond which can form in the large chain dimeric partners within the hexadecamer appears to be associated with oxidative stress and protein turnover.</text>
</comment>
<comment type="miscellaneous">
    <text evidence="1">The basic functional RuBisCO is composed of a large chain homodimer in a 'head-to-tail' conformation. In form I RuBisCO this homodimer is arranged in a barrel-like tetramer with the small subunits forming a tetrameric 'cap' on each end of the 'barrel'.</text>
</comment>
<comment type="similarity">
    <text evidence="1">Belongs to the RuBisCO large chain family. Type I subfamily.</text>
</comment>
<name>RBL_STRLC</name>
<evidence type="ECO:0000255" key="1">
    <source>
        <dbReference type="HAMAP-Rule" id="MF_01338"/>
    </source>
</evidence>
<feature type="propeptide" id="PRO_0000031417" evidence="1">
    <location>
        <begin position="1"/>
        <end position="2"/>
    </location>
</feature>
<feature type="chain" id="PRO_0000031418" description="Ribulose bisphosphate carboxylase large chain">
    <location>
        <begin position="3"/>
        <end position="459" status="greater than"/>
    </location>
</feature>
<feature type="active site" description="Proton acceptor" evidence="1">
    <location>
        <position position="175"/>
    </location>
</feature>
<feature type="active site" description="Proton acceptor" evidence="1">
    <location>
        <position position="294"/>
    </location>
</feature>
<feature type="binding site" description="in homodimeric partner" evidence="1">
    <location>
        <position position="123"/>
    </location>
    <ligand>
        <name>substrate</name>
    </ligand>
</feature>
<feature type="binding site" evidence="1">
    <location>
        <position position="173"/>
    </location>
    <ligand>
        <name>substrate</name>
    </ligand>
</feature>
<feature type="binding site" evidence="1">
    <location>
        <position position="177"/>
    </location>
    <ligand>
        <name>substrate</name>
    </ligand>
</feature>
<feature type="binding site" description="via carbamate group" evidence="1">
    <location>
        <position position="201"/>
    </location>
    <ligand>
        <name>Mg(2+)</name>
        <dbReference type="ChEBI" id="CHEBI:18420"/>
    </ligand>
</feature>
<feature type="binding site" evidence="1">
    <location>
        <position position="203"/>
    </location>
    <ligand>
        <name>Mg(2+)</name>
        <dbReference type="ChEBI" id="CHEBI:18420"/>
    </ligand>
</feature>
<feature type="binding site" evidence="1">
    <location>
        <position position="204"/>
    </location>
    <ligand>
        <name>Mg(2+)</name>
        <dbReference type="ChEBI" id="CHEBI:18420"/>
    </ligand>
</feature>
<feature type="binding site" evidence="1">
    <location>
        <position position="295"/>
    </location>
    <ligand>
        <name>substrate</name>
    </ligand>
</feature>
<feature type="binding site" evidence="1">
    <location>
        <position position="327"/>
    </location>
    <ligand>
        <name>substrate</name>
    </ligand>
</feature>
<feature type="binding site" evidence="1">
    <location>
        <position position="379"/>
    </location>
    <ligand>
        <name>substrate</name>
    </ligand>
</feature>
<feature type="site" description="Transition state stabilizer" evidence="1">
    <location>
        <position position="334"/>
    </location>
</feature>
<feature type="modified residue" description="N-acetylproline" evidence="1">
    <location>
        <position position="3"/>
    </location>
</feature>
<feature type="modified residue" description="N6,N6,N6-trimethyllysine" evidence="1">
    <location>
        <position position="14"/>
    </location>
</feature>
<feature type="modified residue" description="N6-carboxylysine" evidence="1">
    <location>
        <position position="201"/>
    </location>
</feature>
<feature type="disulfide bond" description="Interchain; in linked form" evidence="1">
    <location>
        <position position="247"/>
    </location>
</feature>
<feature type="non-terminal residue">
    <location>
        <position position="459"/>
    </location>
</feature>